<protein>
    <recommendedName>
        <fullName evidence="1">Bifunctional protein FolD 3</fullName>
    </recommendedName>
    <domain>
        <recommendedName>
            <fullName evidence="1">Methylenetetrahydrofolate dehydrogenase</fullName>
            <ecNumber evidence="1">1.5.1.5</ecNumber>
        </recommendedName>
    </domain>
    <domain>
        <recommendedName>
            <fullName evidence="1">Methenyltetrahydrofolate cyclohydrolase</fullName>
            <ecNumber evidence="1">3.5.4.9</ecNumber>
        </recommendedName>
    </domain>
</protein>
<feature type="chain" id="PRO_0000268484" description="Bifunctional protein FolD 3">
    <location>
        <begin position="1"/>
        <end position="290"/>
    </location>
</feature>
<feature type="binding site" evidence="1">
    <location>
        <begin position="163"/>
        <end position="165"/>
    </location>
    <ligand>
        <name>NADP(+)</name>
        <dbReference type="ChEBI" id="CHEBI:58349"/>
    </ligand>
</feature>
<feature type="binding site" evidence="1">
    <location>
        <position position="229"/>
    </location>
    <ligand>
        <name>NADP(+)</name>
        <dbReference type="ChEBI" id="CHEBI:58349"/>
    </ligand>
</feature>
<proteinExistence type="inferred from homology"/>
<evidence type="ECO:0000255" key="1">
    <source>
        <dbReference type="HAMAP-Rule" id="MF_01576"/>
    </source>
</evidence>
<dbReference type="EC" id="1.5.1.5" evidence="1"/>
<dbReference type="EC" id="3.5.4.9" evidence="1"/>
<dbReference type="EMBL" id="CP000362">
    <property type="protein sequence ID" value="ABG33673.1"/>
    <property type="molecule type" value="Genomic_DNA"/>
</dbReference>
<dbReference type="RefSeq" id="WP_011570283.1">
    <property type="nucleotide sequence ID" value="NC_008209.1"/>
</dbReference>
<dbReference type="SMR" id="Q160C0"/>
<dbReference type="STRING" id="375451.RD1_4237"/>
<dbReference type="KEGG" id="rde:RD1_4237"/>
<dbReference type="eggNOG" id="COG0190">
    <property type="taxonomic scope" value="Bacteria"/>
</dbReference>
<dbReference type="HOGENOM" id="CLU_034045_2_1_5"/>
<dbReference type="OrthoDB" id="9803580at2"/>
<dbReference type="UniPathway" id="UPA00193"/>
<dbReference type="Proteomes" id="UP000007029">
    <property type="component" value="Chromosome"/>
</dbReference>
<dbReference type="GO" id="GO:0005829">
    <property type="term" value="C:cytosol"/>
    <property type="evidence" value="ECO:0007669"/>
    <property type="project" value="TreeGrafter"/>
</dbReference>
<dbReference type="GO" id="GO:0004477">
    <property type="term" value="F:methenyltetrahydrofolate cyclohydrolase activity"/>
    <property type="evidence" value="ECO:0007669"/>
    <property type="project" value="UniProtKB-UniRule"/>
</dbReference>
<dbReference type="GO" id="GO:0004488">
    <property type="term" value="F:methylenetetrahydrofolate dehydrogenase (NADP+) activity"/>
    <property type="evidence" value="ECO:0007669"/>
    <property type="project" value="UniProtKB-UniRule"/>
</dbReference>
<dbReference type="GO" id="GO:0000105">
    <property type="term" value="P:L-histidine biosynthetic process"/>
    <property type="evidence" value="ECO:0007669"/>
    <property type="project" value="UniProtKB-KW"/>
</dbReference>
<dbReference type="GO" id="GO:0009086">
    <property type="term" value="P:methionine biosynthetic process"/>
    <property type="evidence" value="ECO:0007669"/>
    <property type="project" value="UniProtKB-KW"/>
</dbReference>
<dbReference type="GO" id="GO:0006164">
    <property type="term" value="P:purine nucleotide biosynthetic process"/>
    <property type="evidence" value="ECO:0007669"/>
    <property type="project" value="UniProtKB-KW"/>
</dbReference>
<dbReference type="GO" id="GO:0035999">
    <property type="term" value="P:tetrahydrofolate interconversion"/>
    <property type="evidence" value="ECO:0007669"/>
    <property type="project" value="UniProtKB-UniRule"/>
</dbReference>
<dbReference type="CDD" id="cd01080">
    <property type="entry name" value="NAD_bind_m-THF_DH_Cyclohyd"/>
    <property type="match status" value="1"/>
</dbReference>
<dbReference type="FunFam" id="3.40.50.720:FF:000006">
    <property type="entry name" value="Bifunctional protein FolD"/>
    <property type="match status" value="1"/>
</dbReference>
<dbReference type="Gene3D" id="3.40.50.10860">
    <property type="entry name" value="Leucine Dehydrogenase, chain A, domain 1"/>
    <property type="match status" value="1"/>
</dbReference>
<dbReference type="Gene3D" id="3.40.50.720">
    <property type="entry name" value="NAD(P)-binding Rossmann-like Domain"/>
    <property type="match status" value="1"/>
</dbReference>
<dbReference type="HAMAP" id="MF_01576">
    <property type="entry name" value="THF_DHG_CYH"/>
    <property type="match status" value="1"/>
</dbReference>
<dbReference type="InterPro" id="IPR046346">
    <property type="entry name" value="Aminoacid_DH-like_N_sf"/>
</dbReference>
<dbReference type="InterPro" id="IPR036291">
    <property type="entry name" value="NAD(P)-bd_dom_sf"/>
</dbReference>
<dbReference type="InterPro" id="IPR000672">
    <property type="entry name" value="THF_DH/CycHdrlase"/>
</dbReference>
<dbReference type="InterPro" id="IPR020630">
    <property type="entry name" value="THF_DH/CycHdrlase_cat_dom"/>
</dbReference>
<dbReference type="InterPro" id="IPR020631">
    <property type="entry name" value="THF_DH/CycHdrlase_NAD-bd_dom"/>
</dbReference>
<dbReference type="PANTHER" id="PTHR48099:SF5">
    <property type="entry name" value="C-1-TETRAHYDROFOLATE SYNTHASE, CYTOPLASMIC"/>
    <property type="match status" value="1"/>
</dbReference>
<dbReference type="PANTHER" id="PTHR48099">
    <property type="entry name" value="C-1-TETRAHYDROFOLATE SYNTHASE, CYTOPLASMIC-RELATED"/>
    <property type="match status" value="1"/>
</dbReference>
<dbReference type="Pfam" id="PF00763">
    <property type="entry name" value="THF_DHG_CYH"/>
    <property type="match status" value="1"/>
</dbReference>
<dbReference type="Pfam" id="PF02882">
    <property type="entry name" value="THF_DHG_CYH_C"/>
    <property type="match status" value="1"/>
</dbReference>
<dbReference type="PRINTS" id="PR00085">
    <property type="entry name" value="THFDHDRGNASE"/>
</dbReference>
<dbReference type="SUPFAM" id="SSF53223">
    <property type="entry name" value="Aminoacid dehydrogenase-like, N-terminal domain"/>
    <property type="match status" value="1"/>
</dbReference>
<dbReference type="SUPFAM" id="SSF51735">
    <property type="entry name" value="NAD(P)-binding Rossmann-fold domains"/>
    <property type="match status" value="1"/>
</dbReference>
<gene>
    <name evidence="1" type="primary">folD3</name>
    <name type="ordered locus">RD1_4237</name>
</gene>
<organism>
    <name type="scientific">Roseobacter denitrificans (strain ATCC 33942 / OCh 114)</name>
    <name type="common">Erythrobacter sp. (strain OCh 114)</name>
    <name type="synonym">Roseobacter denitrificans</name>
    <dbReference type="NCBI Taxonomy" id="375451"/>
    <lineage>
        <taxon>Bacteria</taxon>
        <taxon>Pseudomonadati</taxon>
        <taxon>Pseudomonadota</taxon>
        <taxon>Alphaproteobacteria</taxon>
        <taxon>Rhodobacterales</taxon>
        <taxon>Roseobacteraceae</taxon>
        <taxon>Roseobacter</taxon>
    </lineage>
</organism>
<sequence length="290" mass="31020">MQDPRLLMGKPVRERILEEVRSVTEKVDRIGKLVSISIGDVPEVAVYVRNQARAASTAGLPFDQEFWGADVTQDECKAMIQKMNDDPEVLGIILQRPVPDHINVRSLQSAIHPLKDVEGMNPASIGNIVYNDVAMAPCTAAAAVELIRETGLKLEGLEVVMVGHSEIVGKPAAMMLMAEGATVTVCHHLTRSVAMHSRRADVIVVAVGKAHLIGADMVKPGAAVIDIGINQITEADGNTRIVGDVDTDAVKEIAGWVTPVPGGVGPVTVAILMRNAVRAHERQKAAGWYA</sequence>
<reference key="1">
    <citation type="journal article" date="2007" name="J. Bacteriol.">
        <title>The complete genome sequence of Roseobacter denitrificans reveals a mixotrophic rather than photosynthetic metabolism.</title>
        <authorList>
            <person name="Swingley W.D."/>
            <person name="Sadekar S."/>
            <person name="Mastrian S.D."/>
            <person name="Matthies H.J."/>
            <person name="Hao J."/>
            <person name="Ramos H."/>
            <person name="Acharya C.R."/>
            <person name="Conrad A.L."/>
            <person name="Taylor H.L."/>
            <person name="Dejesa L.C."/>
            <person name="Shah M.K."/>
            <person name="O'Huallachain M.E."/>
            <person name="Lince M.T."/>
            <person name="Blankenship R.E."/>
            <person name="Beatty J.T."/>
            <person name="Touchman J.W."/>
        </authorList>
    </citation>
    <scope>NUCLEOTIDE SEQUENCE [LARGE SCALE GENOMIC DNA]</scope>
    <source>
        <strain>ATCC 33942 / OCh 114</strain>
    </source>
</reference>
<accession>Q160C0</accession>
<name>FOLD3_ROSDO</name>
<keyword id="KW-0028">Amino-acid biosynthesis</keyword>
<keyword id="KW-0368">Histidine biosynthesis</keyword>
<keyword id="KW-0378">Hydrolase</keyword>
<keyword id="KW-0486">Methionine biosynthesis</keyword>
<keyword id="KW-0511">Multifunctional enzyme</keyword>
<keyword id="KW-0521">NADP</keyword>
<keyword id="KW-0554">One-carbon metabolism</keyword>
<keyword id="KW-0560">Oxidoreductase</keyword>
<keyword id="KW-0658">Purine biosynthesis</keyword>
<keyword id="KW-1185">Reference proteome</keyword>
<comment type="function">
    <text evidence="1">Catalyzes the oxidation of 5,10-methylenetetrahydrofolate to 5,10-methenyltetrahydrofolate and then the hydrolysis of 5,10-methenyltetrahydrofolate to 10-formyltetrahydrofolate.</text>
</comment>
<comment type="catalytic activity">
    <reaction evidence="1">
        <text>(6R)-5,10-methylene-5,6,7,8-tetrahydrofolate + NADP(+) = (6R)-5,10-methenyltetrahydrofolate + NADPH</text>
        <dbReference type="Rhea" id="RHEA:22812"/>
        <dbReference type="ChEBI" id="CHEBI:15636"/>
        <dbReference type="ChEBI" id="CHEBI:57455"/>
        <dbReference type="ChEBI" id="CHEBI:57783"/>
        <dbReference type="ChEBI" id="CHEBI:58349"/>
        <dbReference type="EC" id="1.5.1.5"/>
    </reaction>
</comment>
<comment type="catalytic activity">
    <reaction evidence="1">
        <text>(6R)-5,10-methenyltetrahydrofolate + H2O = (6R)-10-formyltetrahydrofolate + H(+)</text>
        <dbReference type="Rhea" id="RHEA:23700"/>
        <dbReference type="ChEBI" id="CHEBI:15377"/>
        <dbReference type="ChEBI" id="CHEBI:15378"/>
        <dbReference type="ChEBI" id="CHEBI:57455"/>
        <dbReference type="ChEBI" id="CHEBI:195366"/>
        <dbReference type="EC" id="3.5.4.9"/>
    </reaction>
</comment>
<comment type="pathway">
    <text evidence="1">One-carbon metabolism; tetrahydrofolate interconversion.</text>
</comment>
<comment type="subunit">
    <text evidence="1">Homodimer.</text>
</comment>
<comment type="similarity">
    <text evidence="1">Belongs to the tetrahydrofolate dehydrogenase/cyclohydrolase family.</text>
</comment>